<accession>A8AW36</accession>
<sequence>MSKEKKFEENLADLEVIVQKLENGDVALEEAIAEFQKGMKLSKELQASLDKAEKTLVKVMQEDGTETEME</sequence>
<name>EX7S_STRGC</name>
<gene>
    <name evidence="1" type="primary">xseB</name>
    <name type="ordered locus">SGO_0694</name>
</gene>
<reference key="1">
    <citation type="journal article" date="2007" name="J. Bacteriol.">
        <title>Genome-wide transcriptional changes in Streptococcus gordonii in response to competence signaling peptide.</title>
        <authorList>
            <person name="Vickerman M.M."/>
            <person name="Iobst S."/>
            <person name="Jesionowski A.M."/>
            <person name="Gill S.R."/>
        </authorList>
    </citation>
    <scope>NUCLEOTIDE SEQUENCE [LARGE SCALE GENOMIC DNA]</scope>
    <source>
        <strain>Challis / ATCC 35105 / BCRC 15272 / CH1 / DL1 / V288</strain>
    </source>
</reference>
<evidence type="ECO:0000255" key="1">
    <source>
        <dbReference type="HAMAP-Rule" id="MF_00337"/>
    </source>
</evidence>
<organism>
    <name type="scientific">Streptococcus gordonii (strain Challis / ATCC 35105 / BCRC 15272 / CH1 / DL1 / V288)</name>
    <dbReference type="NCBI Taxonomy" id="467705"/>
    <lineage>
        <taxon>Bacteria</taxon>
        <taxon>Bacillati</taxon>
        <taxon>Bacillota</taxon>
        <taxon>Bacilli</taxon>
        <taxon>Lactobacillales</taxon>
        <taxon>Streptococcaceae</taxon>
        <taxon>Streptococcus</taxon>
    </lineage>
</organism>
<comment type="function">
    <text evidence="1">Bidirectionally degrades single-stranded DNA into large acid-insoluble oligonucleotides, which are then degraded further into small acid-soluble oligonucleotides.</text>
</comment>
<comment type="catalytic activity">
    <reaction evidence="1">
        <text>Exonucleolytic cleavage in either 5'- to 3'- or 3'- to 5'-direction to yield nucleoside 5'-phosphates.</text>
        <dbReference type="EC" id="3.1.11.6"/>
    </reaction>
</comment>
<comment type="subunit">
    <text evidence="1">Heterooligomer composed of large and small subunits.</text>
</comment>
<comment type="subcellular location">
    <subcellularLocation>
        <location evidence="1">Cytoplasm</location>
    </subcellularLocation>
</comment>
<comment type="similarity">
    <text evidence="1">Belongs to the XseB family.</text>
</comment>
<dbReference type="EC" id="3.1.11.6" evidence="1"/>
<dbReference type="EMBL" id="CP000725">
    <property type="protein sequence ID" value="ABV09858.1"/>
    <property type="molecule type" value="Genomic_DNA"/>
</dbReference>
<dbReference type="RefSeq" id="WP_008809086.1">
    <property type="nucleotide sequence ID" value="NC_009785.1"/>
</dbReference>
<dbReference type="SMR" id="A8AW36"/>
<dbReference type="STRING" id="467705.SGO_0694"/>
<dbReference type="KEGG" id="sgo:SGO_0694"/>
<dbReference type="eggNOG" id="COG1722">
    <property type="taxonomic scope" value="Bacteria"/>
</dbReference>
<dbReference type="HOGENOM" id="CLU_145918_3_2_9"/>
<dbReference type="Proteomes" id="UP000001131">
    <property type="component" value="Chromosome"/>
</dbReference>
<dbReference type="GO" id="GO:0005829">
    <property type="term" value="C:cytosol"/>
    <property type="evidence" value="ECO:0007669"/>
    <property type="project" value="TreeGrafter"/>
</dbReference>
<dbReference type="GO" id="GO:0009318">
    <property type="term" value="C:exodeoxyribonuclease VII complex"/>
    <property type="evidence" value="ECO:0007669"/>
    <property type="project" value="InterPro"/>
</dbReference>
<dbReference type="GO" id="GO:0008855">
    <property type="term" value="F:exodeoxyribonuclease VII activity"/>
    <property type="evidence" value="ECO:0007669"/>
    <property type="project" value="UniProtKB-UniRule"/>
</dbReference>
<dbReference type="GO" id="GO:0006308">
    <property type="term" value="P:DNA catabolic process"/>
    <property type="evidence" value="ECO:0007669"/>
    <property type="project" value="UniProtKB-UniRule"/>
</dbReference>
<dbReference type="Gene3D" id="1.10.287.1040">
    <property type="entry name" value="Exonuclease VII, small subunit"/>
    <property type="match status" value="1"/>
</dbReference>
<dbReference type="HAMAP" id="MF_00337">
    <property type="entry name" value="Exonuc_7_S"/>
    <property type="match status" value="1"/>
</dbReference>
<dbReference type="InterPro" id="IPR003761">
    <property type="entry name" value="Exonuc_VII_S"/>
</dbReference>
<dbReference type="InterPro" id="IPR037004">
    <property type="entry name" value="Exonuc_VII_ssu_sf"/>
</dbReference>
<dbReference type="NCBIfam" id="NF002138">
    <property type="entry name" value="PRK00977.1-2"/>
    <property type="match status" value="1"/>
</dbReference>
<dbReference type="NCBIfam" id="TIGR01280">
    <property type="entry name" value="xseB"/>
    <property type="match status" value="1"/>
</dbReference>
<dbReference type="PANTHER" id="PTHR34137">
    <property type="entry name" value="EXODEOXYRIBONUCLEASE 7 SMALL SUBUNIT"/>
    <property type="match status" value="1"/>
</dbReference>
<dbReference type="PANTHER" id="PTHR34137:SF1">
    <property type="entry name" value="EXODEOXYRIBONUCLEASE 7 SMALL SUBUNIT"/>
    <property type="match status" value="1"/>
</dbReference>
<dbReference type="Pfam" id="PF02609">
    <property type="entry name" value="Exonuc_VII_S"/>
    <property type="match status" value="1"/>
</dbReference>
<dbReference type="PIRSF" id="PIRSF006488">
    <property type="entry name" value="Exonuc_VII_S"/>
    <property type="match status" value="1"/>
</dbReference>
<dbReference type="SUPFAM" id="SSF116842">
    <property type="entry name" value="XseB-like"/>
    <property type="match status" value="1"/>
</dbReference>
<feature type="chain" id="PRO_1000079296" description="Exodeoxyribonuclease 7 small subunit">
    <location>
        <begin position="1"/>
        <end position="70"/>
    </location>
</feature>
<proteinExistence type="inferred from homology"/>
<keyword id="KW-0963">Cytoplasm</keyword>
<keyword id="KW-0269">Exonuclease</keyword>
<keyword id="KW-0378">Hydrolase</keyword>
<keyword id="KW-0540">Nuclease</keyword>
<keyword id="KW-1185">Reference proteome</keyword>
<protein>
    <recommendedName>
        <fullName evidence="1">Exodeoxyribonuclease 7 small subunit</fullName>
        <ecNumber evidence="1">3.1.11.6</ecNumber>
    </recommendedName>
    <alternativeName>
        <fullName evidence="1">Exodeoxyribonuclease VII small subunit</fullName>
        <shortName evidence="1">Exonuclease VII small subunit</shortName>
    </alternativeName>
</protein>